<gene>
    <name evidence="1" type="primary">dltA</name>
    <name type="ordered locus">SPy_1312</name>
    <name type="ordered locus">M5005_Spy1073</name>
</gene>
<keyword id="KW-0002">3D-structure</keyword>
<keyword id="KW-0067">ATP-binding</keyword>
<keyword id="KW-0963">Cytoplasm</keyword>
<keyword id="KW-0436">Ligase</keyword>
<keyword id="KW-0547">Nucleotide-binding</keyword>
<keyword id="KW-1185">Reference proteome</keyword>
<name>DLTA_STRP1</name>
<feature type="chain" id="PRO_0000213165" description="D-alanine--D-alanyl carrier protein ligase">
    <location>
        <begin position="1"/>
        <end position="512"/>
    </location>
</feature>
<feature type="binding site" evidence="1 2 4">
    <location>
        <begin position="152"/>
        <end position="153"/>
    </location>
    <ligand>
        <name>ATP</name>
        <dbReference type="ChEBI" id="CHEBI:30616"/>
    </ligand>
</feature>
<feature type="binding site" evidence="1">
    <location>
        <position position="199"/>
    </location>
    <ligand>
        <name>D-alanine</name>
        <dbReference type="ChEBI" id="CHEBI:57416"/>
    </ligand>
</feature>
<feature type="binding site" evidence="1 2 4">
    <location>
        <begin position="294"/>
        <end position="299"/>
    </location>
    <ligand>
        <name>ATP</name>
        <dbReference type="ChEBI" id="CHEBI:30616"/>
    </ligand>
</feature>
<feature type="binding site" evidence="1">
    <location>
        <position position="303"/>
    </location>
    <ligand>
        <name>D-alanine</name>
        <dbReference type="ChEBI" id="CHEBI:57416"/>
    </ligand>
</feature>
<feature type="binding site" evidence="1 2 4">
    <location>
        <position position="385"/>
    </location>
    <ligand>
        <name>ATP</name>
        <dbReference type="ChEBI" id="CHEBI:30616"/>
    </ligand>
</feature>
<feature type="binding site" evidence="1 2 4">
    <location>
        <begin position="397"/>
        <end position="400"/>
    </location>
    <ligand>
        <name>ATP</name>
        <dbReference type="ChEBI" id="CHEBI:30616"/>
    </ligand>
</feature>
<feature type="binding site" evidence="1 2 4">
    <location>
        <position position="499"/>
    </location>
    <ligand>
        <name>ATP</name>
        <dbReference type="ChEBI" id="CHEBI:30616"/>
    </ligand>
</feature>
<feature type="binding site" evidence="1">
    <location>
        <position position="499"/>
    </location>
    <ligand>
        <name>D-alanine</name>
        <dbReference type="ChEBI" id="CHEBI:57416"/>
    </ligand>
</feature>
<feature type="sequence conflict" description="In Ref. 2; AAZ51691." evidence="3" ref="2">
    <original>D</original>
    <variation>N</variation>
    <location>
        <position position="65"/>
    </location>
</feature>
<feature type="helix" evidence="5">
    <location>
        <begin position="5"/>
        <end position="15"/>
    </location>
</feature>
<feature type="turn" evidence="5">
    <location>
        <begin position="16"/>
        <end position="18"/>
    </location>
</feature>
<feature type="strand" evidence="5">
    <location>
        <begin position="19"/>
        <end position="24"/>
    </location>
</feature>
<feature type="strand" evidence="5">
    <location>
        <begin position="27"/>
        <end position="30"/>
    </location>
</feature>
<feature type="helix" evidence="5">
    <location>
        <begin position="31"/>
        <end position="47"/>
    </location>
</feature>
<feature type="strand" evidence="5">
    <location>
        <begin position="56"/>
        <end position="60"/>
    </location>
</feature>
<feature type="helix" evidence="5">
    <location>
        <begin position="64"/>
        <end position="75"/>
    </location>
</feature>
<feature type="strand" evidence="5">
    <location>
        <begin position="80"/>
        <end position="84"/>
    </location>
</feature>
<feature type="helix" evidence="5">
    <location>
        <begin position="89"/>
        <end position="99"/>
    </location>
</feature>
<feature type="strand" evidence="5">
    <location>
        <begin position="102"/>
        <end position="108"/>
    </location>
</feature>
<feature type="strand" evidence="5">
    <location>
        <begin position="115"/>
        <end position="121"/>
    </location>
</feature>
<feature type="helix" evidence="5">
    <location>
        <begin position="122"/>
        <end position="131"/>
    </location>
</feature>
<feature type="strand" evidence="5">
    <location>
        <begin position="145"/>
        <end position="152"/>
    </location>
</feature>
<feature type="strand" evidence="5">
    <location>
        <begin position="160"/>
        <end position="165"/>
    </location>
</feature>
<feature type="helix" evidence="5">
    <location>
        <begin position="166"/>
        <end position="178"/>
    </location>
</feature>
<feature type="turn" evidence="5">
    <location>
        <begin position="180"/>
        <end position="182"/>
    </location>
</feature>
<feature type="strand" evidence="5">
    <location>
        <begin position="189"/>
        <end position="191"/>
    </location>
</feature>
<feature type="helix" evidence="5">
    <location>
        <begin position="199"/>
        <end position="201"/>
    </location>
</feature>
<feature type="helix" evidence="5">
    <location>
        <begin position="202"/>
        <end position="211"/>
    </location>
</feature>
<feature type="strand" evidence="5">
    <location>
        <begin position="214"/>
        <end position="216"/>
    </location>
</feature>
<feature type="helix" evidence="5">
    <location>
        <begin position="220"/>
        <end position="222"/>
    </location>
</feature>
<feature type="helix" evidence="5">
    <location>
        <begin position="226"/>
        <end position="234"/>
    </location>
</feature>
<feature type="strand" evidence="5">
    <location>
        <begin position="239"/>
        <end position="243"/>
    </location>
</feature>
<feature type="helix" evidence="5">
    <location>
        <begin position="245"/>
        <end position="251"/>
    </location>
</feature>
<feature type="turn" evidence="5">
    <location>
        <begin position="259"/>
        <end position="261"/>
    </location>
</feature>
<feature type="strand" evidence="5">
    <location>
        <begin position="267"/>
        <end position="270"/>
    </location>
</feature>
<feature type="helix" evidence="5">
    <location>
        <begin position="277"/>
        <end position="286"/>
    </location>
</feature>
<feature type="strand" evidence="5">
    <location>
        <begin position="291"/>
        <end position="296"/>
    </location>
</feature>
<feature type="helix" evidence="5">
    <location>
        <begin position="299"/>
        <end position="301"/>
    </location>
</feature>
<feature type="strand" evidence="5">
    <location>
        <begin position="305"/>
        <end position="310"/>
    </location>
</feature>
<feature type="helix" evidence="5">
    <location>
        <begin position="312"/>
        <end position="317"/>
    </location>
</feature>
<feature type="strand" evidence="5">
    <location>
        <begin position="324"/>
        <end position="326"/>
    </location>
</feature>
<feature type="strand" evidence="5">
    <location>
        <begin position="332"/>
        <end position="335"/>
    </location>
</feature>
<feature type="strand" evidence="5">
    <location>
        <begin position="348"/>
        <end position="354"/>
    </location>
</feature>
<feature type="helix" evidence="5">
    <location>
        <begin position="365"/>
        <end position="371"/>
    </location>
</feature>
<feature type="strand" evidence="5">
    <location>
        <begin position="372"/>
        <end position="375"/>
    </location>
</feature>
<feature type="strand" evidence="5">
    <location>
        <begin position="378"/>
        <end position="389"/>
    </location>
</feature>
<feature type="strand" evidence="5">
    <location>
        <begin position="395"/>
        <end position="400"/>
    </location>
</feature>
<feature type="helix" evidence="5">
    <location>
        <begin position="401"/>
        <end position="403"/>
    </location>
</feature>
<feature type="strand" evidence="5">
    <location>
        <begin position="407"/>
        <end position="409"/>
    </location>
</feature>
<feature type="helix" evidence="5">
    <location>
        <begin position="414"/>
        <end position="422"/>
    </location>
</feature>
<feature type="strand" evidence="5">
    <location>
        <begin position="427"/>
        <end position="436"/>
    </location>
</feature>
<feature type="strand" evidence="5">
    <location>
        <begin position="442"/>
        <end position="451"/>
    </location>
</feature>
<feature type="helix" evidence="5">
    <location>
        <begin position="462"/>
        <end position="472"/>
    </location>
</feature>
<feature type="turn" evidence="5">
    <location>
        <begin position="474"/>
        <end position="476"/>
    </location>
</feature>
<feature type="turn" evidence="5">
    <location>
        <begin position="479"/>
        <end position="481"/>
    </location>
</feature>
<feature type="strand" evidence="5">
    <location>
        <begin position="484"/>
        <end position="488"/>
    </location>
</feature>
<feature type="strand" evidence="5">
    <location>
        <begin position="498"/>
        <end position="500"/>
    </location>
</feature>
<feature type="helix" evidence="5">
    <location>
        <begin position="502"/>
        <end position="507"/>
    </location>
</feature>
<organism>
    <name type="scientific">Streptococcus pyogenes serotype M1</name>
    <dbReference type="NCBI Taxonomy" id="301447"/>
    <lineage>
        <taxon>Bacteria</taxon>
        <taxon>Bacillati</taxon>
        <taxon>Bacillota</taxon>
        <taxon>Bacilli</taxon>
        <taxon>Lactobacillales</taxon>
        <taxon>Streptococcaceae</taxon>
        <taxon>Streptococcus</taxon>
    </lineage>
</organism>
<comment type="function">
    <text evidence="1">Catalyzes the first step in the D-alanylation of lipoteichoic acid (LTA), the activation of D-alanine and its transfer onto the D-alanyl carrier protein (Dcp) DltC. In an ATP-dependent two-step reaction, forms a high energy D-alanyl-AMP intermediate, followed by transfer of the D-alanyl residue as a thiol ester to the phosphopantheinyl prosthetic group of the Dcp. D-alanylation of LTA plays an important role in modulating the properties of the cell wall in Gram-positive bacteria, influencing the net charge of the cell wall.</text>
</comment>
<comment type="catalytic activity">
    <reaction evidence="1">
        <text>holo-[D-alanyl-carrier protein] + D-alanine + ATP = D-alanyl-[D-alanyl-carrier protein] + AMP + diphosphate</text>
        <dbReference type="Rhea" id="RHEA:55132"/>
        <dbReference type="Rhea" id="RHEA-COMP:14102"/>
        <dbReference type="Rhea" id="RHEA-COMP:14103"/>
        <dbReference type="ChEBI" id="CHEBI:30616"/>
        <dbReference type="ChEBI" id="CHEBI:33019"/>
        <dbReference type="ChEBI" id="CHEBI:57416"/>
        <dbReference type="ChEBI" id="CHEBI:64479"/>
        <dbReference type="ChEBI" id="CHEBI:138620"/>
        <dbReference type="ChEBI" id="CHEBI:456215"/>
        <dbReference type="EC" id="6.2.1.54"/>
    </reaction>
</comment>
<comment type="pathway">
    <text evidence="1">Cell wall biogenesis; lipoteichoic acid biosynthesis.</text>
</comment>
<comment type="subcellular location">
    <subcellularLocation>
        <location evidence="1">Cytoplasm</location>
    </subcellularLocation>
</comment>
<comment type="similarity">
    <text evidence="1">Belongs to the ATP-dependent AMP-binding enzyme family. DltA subfamily.</text>
</comment>
<sequence length="512" mass="56987">MIKDMIDSIEQFAQTQADFPVYDCLGERRTYGQLKRDSDSIAAFIDSLALLAKSPVLVFGAQTYDMLATFVALTKSGHAYIPVDVHSAPERILAIIEIAKPSLIIAIEEFPLTIEGISLVSLSEIESAKLAEMPYERTHSVKGDDNYYIIFTSGTTGQPKGVQISHDNLLSFTNWMIEDAAFDVPKQPQMLAQPPYSFDLSVMYWAPTLALGGTLFALPKELVADFKQLFTTIAQLPVGIWTSTPSFADMAMLSDDFCQAKMPALTHFYFDGEELTVSTARKLFERFPSAKIINAYGPTEATVALSAIEITREMVDNYTRLPIGYPKPDSPTYIIDEDGKELSSGEQGEIIVTGPAVSKGYLNNPEKTAEAFFTFKGQPAYHTGDIGSLTEDNILLYGGRLDFQIKYAGYRIELEDVSQQLNQSPMVASAVAVPRYNKEHKVQNLLAYIVVKDGVKERFDRELELTKAIKASVKDHMMSYMMPSKFLYRDSLPLTPNGKIDIKTLINEVNNR</sequence>
<protein>
    <recommendedName>
        <fullName evidence="1">D-alanine--D-alanyl carrier protein ligase</fullName>
        <shortName evidence="1">DCL</shortName>
        <ecNumber evidence="1">6.2.1.54</ecNumber>
    </recommendedName>
    <alternativeName>
        <fullName evidence="1">D-alanine--poly(phosphoribitol) ligase subunit 1</fullName>
    </alternativeName>
    <alternativeName>
        <fullName evidence="1">D-alanine-activating enzyme</fullName>
        <shortName evidence="1">DAE</shortName>
    </alternativeName>
</protein>
<evidence type="ECO:0000255" key="1">
    <source>
        <dbReference type="HAMAP-Rule" id="MF_00593"/>
    </source>
</evidence>
<evidence type="ECO:0000269" key="2">
    <source ref="3"/>
</evidence>
<evidence type="ECO:0000305" key="3"/>
<evidence type="ECO:0007744" key="4">
    <source>
        <dbReference type="PDB" id="3LGX"/>
    </source>
</evidence>
<evidence type="ECO:0007829" key="5">
    <source>
        <dbReference type="PDB" id="3LGX"/>
    </source>
</evidence>
<reference key="1">
    <citation type="journal article" date="2001" name="Proc. Natl. Acad. Sci. U.S.A.">
        <title>Complete genome sequence of an M1 strain of Streptococcus pyogenes.</title>
        <authorList>
            <person name="Ferretti J.J."/>
            <person name="McShan W.M."/>
            <person name="Ajdic D.J."/>
            <person name="Savic D.J."/>
            <person name="Savic G."/>
            <person name="Lyon K."/>
            <person name="Primeaux C."/>
            <person name="Sezate S."/>
            <person name="Suvorov A.N."/>
            <person name="Kenton S."/>
            <person name="Lai H.S."/>
            <person name="Lin S.P."/>
            <person name="Qian Y."/>
            <person name="Jia H.G."/>
            <person name="Najar F.Z."/>
            <person name="Ren Q."/>
            <person name="Zhu H."/>
            <person name="Song L."/>
            <person name="White J."/>
            <person name="Yuan X."/>
            <person name="Clifton S.W."/>
            <person name="Roe B.A."/>
            <person name="McLaughlin R.E."/>
        </authorList>
    </citation>
    <scope>NUCLEOTIDE SEQUENCE [LARGE SCALE GENOMIC DNA]</scope>
    <source>
        <strain>ATCC 700294 / SF370 / Serotype M1</strain>
    </source>
</reference>
<reference key="2">
    <citation type="journal article" date="2005" name="J. Infect. Dis.">
        <title>Evolutionary origin and emergence of a highly successful clone of serotype M1 group A Streptococcus involved multiple horizontal gene transfer events.</title>
        <authorList>
            <person name="Sumby P."/>
            <person name="Porcella S.F."/>
            <person name="Madrigal A.G."/>
            <person name="Barbian K.D."/>
            <person name="Virtaneva K."/>
            <person name="Ricklefs S.M."/>
            <person name="Sturdevant D.E."/>
            <person name="Graham M.R."/>
            <person name="Vuopio-Varkila J."/>
            <person name="Hoe N.P."/>
            <person name="Musser J.M."/>
        </authorList>
    </citation>
    <scope>NUCLEOTIDE SEQUENCE [LARGE SCALE GENOMIC DNA]</scope>
    <source>
        <strain>ATCC BAA-947 / MGAS5005 / Serotype M1</strain>
    </source>
</reference>
<reference key="3">
    <citation type="submission" date="2010-01" db="PDB data bank">
        <title>Structure of probable D-alanine-poly(phosphoribitol) ligase subunit-1 from Streptococcus pyogenes with ATP.</title>
        <authorList>
            <person name="Ramagopal U.A."/>
            <person name="Toro R."/>
            <person name="Burley S.K."/>
            <person name="Almo S.C."/>
        </authorList>
    </citation>
    <scope>X-RAY CRYSTALLOGRAPHY (2.60 ANGSTROMS) OF 3-512 IN COMPLEX WITH ATP</scope>
</reference>
<accession>Q99ZA6</accession>
<accession>Q48Y81</accession>
<dbReference type="EC" id="6.2.1.54" evidence="1"/>
<dbReference type="EMBL" id="AE004092">
    <property type="protein sequence ID" value="AAK34156.1"/>
    <property type="molecule type" value="Genomic_DNA"/>
</dbReference>
<dbReference type="EMBL" id="CP000017">
    <property type="protein sequence ID" value="AAZ51691.1"/>
    <property type="molecule type" value="Genomic_DNA"/>
</dbReference>
<dbReference type="RefSeq" id="NP_269435.1">
    <property type="nucleotide sequence ID" value="NC_002737.2"/>
</dbReference>
<dbReference type="PDB" id="3LGX">
    <property type="method" value="X-ray"/>
    <property type="resolution" value="2.60 A"/>
    <property type="chains" value="A/B/C/D=3-512"/>
</dbReference>
<dbReference type="PDBsum" id="3LGX"/>
<dbReference type="SMR" id="Q99ZA6"/>
<dbReference type="PaxDb" id="1314-HKU360_01052"/>
<dbReference type="KEGG" id="spy:SPy_1312"/>
<dbReference type="KEGG" id="spz:M5005_Spy1073"/>
<dbReference type="PATRIC" id="fig|160490.10.peg.1149"/>
<dbReference type="HOGENOM" id="CLU_000022_2_12_9"/>
<dbReference type="OMA" id="VMDLYPC"/>
<dbReference type="UniPathway" id="UPA00556"/>
<dbReference type="EvolutionaryTrace" id="Q99ZA6"/>
<dbReference type="PHI-base" id="PHI:8561"/>
<dbReference type="Proteomes" id="UP000000750">
    <property type="component" value="Chromosome"/>
</dbReference>
<dbReference type="GO" id="GO:0005737">
    <property type="term" value="C:cytoplasm"/>
    <property type="evidence" value="ECO:0007669"/>
    <property type="project" value="UniProtKB-SubCell"/>
</dbReference>
<dbReference type="GO" id="GO:0005524">
    <property type="term" value="F:ATP binding"/>
    <property type="evidence" value="ECO:0007669"/>
    <property type="project" value="UniProtKB-KW"/>
</dbReference>
<dbReference type="GO" id="GO:0047473">
    <property type="term" value="F:D-alanine [D-alanyl carrier protein] ligase activity"/>
    <property type="evidence" value="ECO:0007669"/>
    <property type="project" value="UniProtKB-UniRule"/>
</dbReference>
<dbReference type="GO" id="GO:0070395">
    <property type="term" value="P:lipoteichoic acid biosynthetic process"/>
    <property type="evidence" value="ECO:0007669"/>
    <property type="project" value="UniProtKB-UniRule"/>
</dbReference>
<dbReference type="CDD" id="cd05945">
    <property type="entry name" value="DltA"/>
    <property type="match status" value="1"/>
</dbReference>
<dbReference type="FunFam" id="3.30.300.30:FF:000012">
    <property type="entry name" value="D-alanine--D-alanyl carrier protein ligase"/>
    <property type="match status" value="1"/>
</dbReference>
<dbReference type="Gene3D" id="3.30.300.30">
    <property type="match status" value="1"/>
</dbReference>
<dbReference type="Gene3D" id="3.40.50.12780">
    <property type="entry name" value="N-terminal domain of ligase-like"/>
    <property type="match status" value="1"/>
</dbReference>
<dbReference type="HAMAP" id="MF_00593">
    <property type="entry name" value="DltA"/>
    <property type="match status" value="1"/>
</dbReference>
<dbReference type="InterPro" id="IPR010071">
    <property type="entry name" value="AA_adenyl_dom"/>
</dbReference>
<dbReference type="InterPro" id="IPR025110">
    <property type="entry name" value="AMP-bd_C"/>
</dbReference>
<dbReference type="InterPro" id="IPR045851">
    <property type="entry name" value="AMP-bd_C_sf"/>
</dbReference>
<dbReference type="InterPro" id="IPR020845">
    <property type="entry name" value="AMP-binding_CS"/>
</dbReference>
<dbReference type="InterPro" id="IPR000873">
    <property type="entry name" value="AMP-dep_synth/lig_dom"/>
</dbReference>
<dbReference type="InterPro" id="IPR042099">
    <property type="entry name" value="ANL_N_sf"/>
</dbReference>
<dbReference type="InterPro" id="IPR010072">
    <property type="entry name" value="DltA"/>
</dbReference>
<dbReference type="InterPro" id="IPR044507">
    <property type="entry name" value="DltA-like"/>
</dbReference>
<dbReference type="NCBIfam" id="TIGR01733">
    <property type="entry name" value="AA-adenyl-dom"/>
    <property type="match status" value="1"/>
</dbReference>
<dbReference type="NCBIfam" id="TIGR01734">
    <property type="entry name" value="D-ala-DACP-lig"/>
    <property type="match status" value="1"/>
</dbReference>
<dbReference type="NCBIfam" id="NF003417">
    <property type="entry name" value="PRK04813.1"/>
    <property type="match status" value="1"/>
</dbReference>
<dbReference type="PANTHER" id="PTHR45398">
    <property type="match status" value="1"/>
</dbReference>
<dbReference type="PANTHER" id="PTHR45398:SF1">
    <property type="entry name" value="ENZYME, PUTATIVE (JCVI)-RELATED"/>
    <property type="match status" value="1"/>
</dbReference>
<dbReference type="Pfam" id="PF00501">
    <property type="entry name" value="AMP-binding"/>
    <property type="match status" value="1"/>
</dbReference>
<dbReference type="Pfam" id="PF13193">
    <property type="entry name" value="AMP-binding_C"/>
    <property type="match status" value="1"/>
</dbReference>
<dbReference type="SUPFAM" id="SSF56801">
    <property type="entry name" value="Acetyl-CoA synthetase-like"/>
    <property type="match status" value="1"/>
</dbReference>
<dbReference type="PROSITE" id="PS00455">
    <property type="entry name" value="AMP_BINDING"/>
    <property type="match status" value="1"/>
</dbReference>
<proteinExistence type="evidence at protein level"/>